<accession>Q9L9F8</accession>
<keyword id="KW-0045">Antibiotic biosynthesis</keyword>
<keyword id="KW-0521">NADP</keyword>
<keyword id="KW-0560">Oxidoreductase</keyword>
<name>NOVJ_STRNV</name>
<feature type="chain" id="PRO_0000423995" description="Short-chain reductase protein NovJ">
    <location>
        <begin position="1"/>
        <end position="262"/>
    </location>
</feature>
<feature type="active site" description="Proton acceptor" evidence="4">
    <location>
        <position position="164"/>
    </location>
</feature>
<feature type="binding site" evidence="1">
    <location>
        <begin position="23"/>
        <end position="26"/>
    </location>
    <ligand>
        <name>NADP(+)</name>
        <dbReference type="ChEBI" id="CHEBI:58349"/>
    </ligand>
</feature>
<feature type="binding site" evidence="1">
    <location>
        <begin position="73"/>
        <end position="74"/>
    </location>
    <ligand>
        <name>NADP(+)</name>
        <dbReference type="ChEBI" id="CHEBI:58349"/>
    </ligand>
</feature>
<feature type="binding site" evidence="3">
    <location>
        <position position="152"/>
    </location>
    <ligand>
        <name>substrate</name>
    </ligand>
</feature>
<feature type="binding site" evidence="1">
    <location>
        <begin position="164"/>
        <end position="168"/>
    </location>
    <ligand>
        <name>NADP(+)</name>
        <dbReference type="ChEBI" id="CHEBI:58349"/>
    </ligand>
</feature>
<feature type="mutagenesis site" description="2-3-fold decrease in beta-ketotyrosine product formation." evidence="2">
    <original>S</original>
    <variation>A</variation>
    <location>
        <position position="152"/>
    </location>
</feature>
<feature type="mutagenesis site" description="50-fold reduction in catalytic activity." evidence="2">
    <original>Y</original>
    <variation>F</variation>
    <location>
        <position position="164"/>
    </location>
</feature>
<feature type="mutagenesis site" description="Does not alter the catalytic turnover." evidence="2">
    <original>K</original>
    <variation>I</variation>
    <location>
        <position position="168"/>
    </location>
</feature>
<dbReference type="EC" id="1.1.1.-"/>
<dbReference type="EMBL" id="AF170880">
    <property type="protein sequence ID" value="AAF67503.1"/>
    <property type="molecule type" value="Genomic_DNA"/>
</dbReference>
<dbReference type="RefSeq" id="WP_069626140.1">
    <property type="nucleotide sequence ID" value="NZ_JBFBIX010000004.1"/>
</dbReference>
<dbReference type="SMR" id="Q9L9F8"/>
<dbReference type="KEGG" id="ag:AAF67503"/>
<dbReference type="BioCyc" id="MetaCyc:MONOMER-18082"/>
<dbReference type="UniPathway" id="UPA01035"/>
<dbReference type="GO" id="GO:0016616">
    <property type="term" value="F:oxidoreductase activity, acting on the CH-OH group of donors, NAD or NADP as acceptor"/>
    <property type="evidence" value="ECO:0000314"/>
    <property type="project" value="UniProtKB"/>
</dbReference>
<dbReference type="GO" id="GO:0030497">
    <property type="term" value="P:fatty acid elongation"/>
    <property type="evidence" value="ECO:0007669"/>
    <property type="project" value="TreeGrafter"/>
</dbReference>
<dbReference type="GO" id="GO:0043642">
    <property type="term" value="P:novobiocin biosynthetic process"/>
    <property type="evidence" value="ECO:0000314"/>
    <property type="project" value="UniProtKB"/>
</dbReference>
<dbReference type="FunFam" id="3.40.50.720:FF:000115">
    <property type="entry name" value="3-oxoacyl-[acyl-carrier-protein] reductase FabG"/>
    <property type="match status" value="1"/>
</dbReference>
<dbReference type="Gene3D" id="3.40.50.720">
    <property type="entry name" value="NAD(P)-binding Rossmann-like Domain"/>
    <property type="match status" value="1"/>
</dbReference>
<dbReference type="InterPro" id="IPR036291">
    <property type="entry name" value="NAD(P)-bd_dom_sf"/>
</dbReference>
<dbReference type="InterPro" id="IPR020904">
    <property type="entry name" value="Sc_DH/Rdtase_CS"/>
</dbReference>
<dbReference type="InterPro" id="IPR002347">
    <property type="entry name" value="SDR_fam"/>
</dbReference>
<dbReference type="NCBIfam" id="NF009466">
    <property type="entry name" value="PRK12826.1-2"/>
    <property type="match status" value="1"/>
</dbReference>
<dbReference type="PANTHER" id="PTHR42760:SF40">
    <property type="entry name" value="3-OXOACYL-[ACYL-CARRIER-PROTEIN] REDUCTASE, CHLOROPLASTIC"/>
    <property type="match status" value="1"/>
</dbReference>
<dbReference type="PANTHER" id="PTHR42760">
    <property type="entry name" value="SHORT-CHAIN DEHYDROGENASES/REDUCTASES FAMILY MEMBER"/>
    <property type="match status" value="1"/>
</dbReference>
<dbReference type="Pfam" id="PF13561">
    <property type="entry name" value="adh_short_C2"/>
    <property type="match status" value="1"/>
</dbReference>
<dbReference type="PRINTS" id="PR00081">
    <property type="entry name" value="GDHRDH"/>
</dbReference>
<dbReference type="PRINTS" id="PR00080">
    <property type="entry name" value="SDRFAMILY"/>
</dbReference>
<dbReference type="SMART" id="SM00822">
    <property type="entry name" value="PKS_KR"/>
    <property type="match status" value="1"/>
</dbReference>
<dbReference type="SUPFAM" id="SSF51735">
    <property type="entry name" value="NAD(P)-binding Rossmann-fold domains"/>
    <property type="match status" value="1"/>
</dbReference>
<dbReference type="PROSITE" id="PS00061">
    <property type="entry name" value="ADH_SHORT"/>
    <property type="match status" value="1"/>
</dbReference>
<evidence type="ECO:0000250" key="1"/>
<evidence type="ECO:0000269" key="2">
    <source>
    </source>
</evidence>
<evidence type="ECO:0000305" key="3"/>
<evidence type="ECO:0000305" key="4">
    <source>
    </source>
</evidence>
<sequence length="262" mass="26850">MTSPADATTEVAVSQESVAMVTGAGRGIGAATAERLAAEGMAVIVVDRTEQDTRATVAAIRTAGGRARGIGCDVAVAQAVTAAVATAVEEFGRIDVLVNCAGINRDRLLLTMGDQEWDTVLDVNLGGTMRCSFAVGRHMRRQGHGRIINFSSVAARGNAGQTNYATAKGAIAGFTRTLAAELGPHGVTVNAIAPGFVATPMVDELAERLGGDRDSVMSEAAKSSAVGRIGTPEEIAATVVFVARPESGYLTGETVHVDGGRP</sequence>
<gene>
    <name type="primary">novJ</name>
</gene>
<organism>
    <name type="scientific">Streptomyces niveus</name>
    <name type="common">Streptomyces spheroides</name>
    <dbReference type="NCBI Taxonomy" id="193462"/>
    <lineage>
        <taxon>Bacteria</taxon>
        <taxon>Bacillati</taxon>
        <taxon>Actinomycetota</taxon>
        <taxon>Actinomycetes</taxon>
        <taxon>Kitasatosporales</taxon>
        <taxon>Streptomycetaceae</taxon>
        <taxon>Streptomyces</taxon>
    </lineage>
</organism>
<proteinExistence type="evidence at protein level"/>
<comment type="function">
    <text evidence="2">Catalytic subunit of the NovJ(2)K(2) heterotetramer that catalyzes the NADPH-dependent reduction of the tyrosyl moiety of L-beta-OH-Tyr-S-NovH intermediate to yield the tethered beta-ketotyrosyl-S-NovH in the novobiocin biosynthesis pathway. Novobiocin is an aminocoumarin family antibiotic that targets bacterial DNA gyrases.</text>
</comment>
<comment type="pathway">
    <text evidence="2">Antibiotic biosynthesis; novobiocin biosynthesis.</text>
</comment>
<comment type="subunit">
    <text evidence="2">Heterotetramer; the NovJ(2)K(2) heterotetramer is composed of subunits of 2 NovJ and 2 subunits of NovK.</text>
</comment>
<comment type="similarity">
    <text evidence="3">Belongs to the short-chain dehydrogenases/reductases (SDR) family.</text>
</comment>
<reference key="1">
    <citation type="journal article" date="2000" name="Antimicrob. Agents Chemother.">
        <title>Identification of the novobiocin biosynthetic gene cluster of Streptomyces spheroides NCIB 11891.</title>
        <authorList>
            <person name="Steffensky M."/>
            <person name="Muhlenweg A."/>
            <person name="Wang Z.X."/>
            <person name="Li S.M."/>
            <person name="Heide L."/>
        </authorList>
    </citation>
    <scope>NUCLEOTIDE SEQUENCE [GENOMIC DNA]</scope>
    <source>
        <strain>ATCC 23965 / DSM 40292 / JCM 4252 / NBRC 12917 / NCIMB 11891 / NRRL 2449</strain>
    </source>
</reference>
<reference key="2">
    <citation type="journal article" date="2005" name="Biochemistry">
        <title>NovJ/NovK catalyze benzylic oxidation of a beta-hydroxyl tyrosyl-S-pantetheinyl enzyme during aminocoumarin ring formation in novobiocin biosynthesis.</title>
        <authorList>
            <person name="Pacholec M."/>
            <person name="Hillson N.J."/>
            <person name="Walsh C.T."/>
        </authorList>
    </citation>
    <scope>FUNCTION</scope>
    <scope>CATALYTIC ACTIVITY</scope>
    <scope>ACTIVE SITE</scope>
    <scope>PATHWAY</scope>
    <scope>SUBUNIT</scope>
    <scope>MUTAGENESIS OF SER-152; TYR-164 AND LYS-168</scope>
    <source>
        <strain>ATCC 23965 / DSM 40292 / JCM 4252 / NBRC 12917 / NCIMB 11891 / NRRL 2449</strain>
    </source>
</reference>
<protein>
    <recommendedName>
        <fullName>Short-chain reductase protein NovJ</fullName>
        <ecNumber>1.1.1.-</ecNumber>
    </recommendedName>
    <alternativeName>
        <fullName>Novobiocin biosynthesis protein J</fullName>
    </alternativeName>
</protein>